<keyword id="KW-0560">Oxidoreductase</keyword>
<keyword id="KW-0663">Pyridoxal phosphate</keyword>
<evidence type="ECO:0000255" key="1">
    <source>
        <dbReference type="HAMAP-Rule" id="MF_00711"/>
    </source>
</evidence>
<comment type="function">
    <text evidence="1">The glycine cleavage system catalyzes the degradation of glycine. The P protein binds the alpha-amino group of glycine through its pyridoxal phosphate cofactor; CO(2) is released and the remaining methylamine moiety is then transferred to the lipoamide cofactor of the H protein.</text>
</comment>
<comment type="catalytic activity">
    <reaction evidence="1">
        <text>N(6)-[(R)-lipoyl]-L-lysyl-[glycine-cleavage complex H protein] + glycine + H(+) = N(6)-[(R)-S(8)-aminomethyldihydrolipoyl]-L-lysyl-[glycine-cleavage complex H protein] + CO2</text>
        <dbReference type="Rhea" id="RHEA:24304"/>
        <dbReference type="Rhea" id="RHEA-COMP:10494"/>
        <dbReference type="Rhea" id="RHEA-COMP:10495"/>
        <dbReference type="ChEBI" id="CHEBI:15378"/>
        <dbReference type="ChEBI" id="CHEBI:16526"/>
        <dbReference type="ChEBI" id="CHEBI:57305"/>
        <dbReference type="ChEBI" id="CHEBI:83099"/>
        <dbReference type="ChEBI" id="CHEBI:83143"/>
        <dbReference type="EC" id="1.4.4.2"/>
    </reaction>
</comment>
<comment type="cofactor">
    <cofactor evidence="1">
        <name>pyridoxal 5'-phosphate</name>
        <dbReference type="ChEBI" id="CHEBI:597326"/>
    </cofactor>
</comment>
<comment type="subunit">
    <text evidence="1">The glycine cleavage system is composed of four proteins: P, T, L and H.</text>
</comment>
<comment type="similarity">
    <text evidence="1">Belongs to the GcvP family.</text>
</comment>
<gene>
    <name evidence="1" type="primary">gcvP</name>
    <name type="ordered locus">ECH74115_4194</name>
</gene>
<dbReference type="EC" id="1.4.4.2" evidence="1"/>
<dbReference type="EMBL" id="CP001164">
    <property type="protein sequence ID" value="ACI36457.1"/>
    <property type="molecule type" value="Genomic_DNA"/>
</dbReference>
<dbReference type="RefSeq" id="WP_000195009.1">
    <property type="nucleotide sequence ID" value="NC_011353.1"/>
</dbReference>
<dbReference type="SMR" id="B5YQ95"/>
<dbReference type="KEGG" id="ecf:ECH74115_4194"/>
<dbReference type="HOGENOM" id="CLU_004620_1_1_6"/>
<dbReference type="GO" id="GO:0005829">
    <property type="term" value="C:cytosol"/>
    <property type="evidence" value="ECO:0007669"/>
    <property type="project" value="TreeGrafter"/>
</dbReference>
<dbReference type="GO" id="GO:0005960">
    <property type="term" value="C:glycine cleavage complex"/>
    <property type="evidence" value="ECO:0007669"/>
    <property type="project" value="TreeGrafter"/>
</dbReference>
<dbReference type="GO" id="GO:0016594">
    <property type="term" value="F:glycine binding"/>
    <property type="evidence" value="ECO:0007669"/>
    <property type="project" value="TreeGrafter"/>
</dbReference>
<dbReference type="GO" id="GO:0004375">
    <property type="term" value="F:glycine dehydrogenase (decarboxylating) activity"/>
    <property type="evidence" value="ECO:0007669"/>
    <property type="project" value="UniProtKB-EC"/>
</dbReference>
<dbReference type="GO" id="GO:0030170">
    <property type="term" value="F:pyridoxal phosphate binding"/>
    <property type="evidence" value="ECO:0007669"/>
    <property type="project" value="TreeGrafter"/>
</dbReference>
<dbReference type="GO" id="GO:0019464">
    <property type="term" value="P:glycine decarboxylation via glycine cleavage system"/>
    <property type="evidence" value="ECO:0007669"/>
    <property type="project" value="UniProtKB-UniRule"/>
</dbReference>
<dbReference type="CDD" id="cd00613">
    <property type="entry name" value="GDC-P"/>
    <property type="match status" value="2"/>
</dbReference>
<dbReference type="FunFam" id="3.40.640.10:FF:000005">
    <property type="entry name" value="Glycine dehydrogenase (decarboxylating), mitochondrial"/>
    <property type="match status" value="1"/>
</dbReference>
<dbReference type="FunFam" id="3.90.1150.10:FF:000007">
    <property type="entry name" value="Glycine dehydrogenase (decarboxylating), mitochondrial"/>
    <property type="match status" value="1"/>
</dbReference>
<dbReference type="FunFam" id="3.40.640.10:FF:000007">
    <property type="entry name" value="glycine dehydrogenase (Decarboxylating), mitochondrial"/>
    <property type="match status" value="1"/>
</dbReference>
<dbReference type="Gene3D" id="3.90.1150.10">
    <property type="entry name" value="Aspartate Aminotransferase, domain 1"/>
    <property type="match status" value="1"/>
</dbReference>
<dbReference type="Gene3D" id="3.40.640.10">
    <property type="entry name" value="Type I PLP-dependent aspartate aminotransferase-like (Major domain)"/>
    <property type="match status" value="2"/>
</dbReference>
<dbReference type="HAMAP" id="MF_00711">
    <property type="entry name" value="GcvP"/>
    <property type="match status" value="1"/>
</dbReference>
<dbReference type="InterPro" id="IPR003437">
    <property type="entry name" value="GcvP"/>
</dbReference>
<dbReference type="InterPro" id="IPR049316">
    <property type="entry name" value="GDC-P_C"/>
</dbReference>
<dbReference type="InterPro" id="IPR049315">
    <property type="entry name" value="GDC-P_N"/>
</dbReference>
<dbReference type="InterPro" id="IPR020581">
    <property type="entry name" value="GDC_P"/>
</dbReference>
<dbReference type="InterPro" id="IPR015424">
    <property type="entry name" value="PyrdxlP-dep_Trfase"/>
</dbReference>
<dbReference type="InterPro" id="IPR015421">
    <property type="entry name" value="PyrdxlP-dep_Trfase_major"/>
</dbReference>
<dbReference type="InterPro" id="IPR015422">
    <property type="entry name" value="PyrdxlP-dep_Trfase_small"/>
</dbReference>
<dbReference type="NCBIfam" id="TIGR00461">
    <property type="entry name" value="gcvP"/>
    <property type="match status" value="1"/>
</dbReference>
<dbReference type="NCBIfam" id="NF003346">
    <property type="entry name" value="PRK04366.1"/>
    <property type="match status" value="1"/>
</dbReference>
<dbReference type="PANTHER" id="PTHR11773:SF13">
    <property type="entry name" value="GLYCINE DEHYDROGENASE (DECARBOXYLATING)"/>
    <property type="match status" value="1"/>
</dbReference>
<dbReference type="PANTHER" id="PTHR11773">
    <property type="entry name" value="GLYCINE DEHYDROGENASE, DECARBOXYLATING"/>
    <property type="match status" value="1"/>
</dbReference>
<dbReference type="Pfam" id="PF21478">
    <property type="entry name" value="GcvP2_C"/>
    <property type="match status" value="1"/>
</dbReference>
<dbReference type="Pfam" id="PF02347">
    <property type="entry name" value="GDC-P"/>
    <property type="match status" value="2"/>
</dbReference>
<dbReference type="SUPFAM" id="SSF53383">
    <property type="entry name" value="PLP-dependent transferases"/>
    <property type="match status" value="2"/>
</dbReference>
<organism>
    <name type="scientific">Escherichia coli O157:H7 (strain EC4115 / EHEC)</name>
    <dbReference type="NCBI Taxonomy" id="444450"/>
    <lineage>
        <taxon>Bacteria</taxon>
        <taxon>Pseudomonadati</taxon>
        <taxon>Pseudomonadota</taxon>
        <taxon>Gammaproteobacteria</taxon>
        <taxon>Enterobacterales</taxon>
        <taxon>Enterobacteriaceae</taxon>
        <taxon>Escherichia</taxon>
    </lineage>
</organism>
<feature type="chain" id="PRO_1000132435" description="Glycine dehydrogenase (decarboxylating)">
    <location>
        <begin position="1"/>
        <end position="957"/>
    </location>
</feature>
<feature type="modified residue" description="N6-(pyridoxal phosphate)lysine" evidence="1">
    <location>
        <position position="708"/>
    </location>
</feature>
<reference key="1">
    <citation type="journal article" date="2011" name="Proc. Natl. Acad. Sci. U.S.A.">
        <title>Genomic anatomy of Escherichia coli O157:H7 outbreaks.</title>
        <authorList>
            <person name="Eppinger M."/>
            <person name="Mammel M.K."/>
            <person name="Leclerc J.E."/>
            <person name="Ravel J."/>
            <person name="Cebula T.A."/>
        </authorList>
    </citation>
    <scope>NUCLEOTIDE SEQUENCE [LARGE SCALE GENOMIC DNA]</scope>
    <source>
        <strain>EC4115 / EHEC</strain>
    </source>
</reference>
<proteinExistence type="inferred from homology"/>
<name>GCSP_ECO5E</name>
<sequence>MTQTLSQLENSGAFIERHIGPDAAQQQEMLNAVGAQSLNALTGQIVPKDIQLATPPQVGAPATEYAALAELKAIASRNKRFTSYIGMGYTAVQLPPVILRNMLENPGWYTAYTPYQPEVSQGRLEALLNFQQVTLDLTGLDMASASLLDEATAAAEAMAMAKRVSKLKNANRFFVASDVHPQTLDVVRTRAETFGFEVIVDDAQKVLDHQDIFGVLLQQVGTTGEIHDYTALISELKSRKIVVSVAADIMALVLLTAPGKQGADIVFGSAQRFGVPMGYGGPHAAFFAAKDEYKRSMPGRIIGVSKDAAGNTALRMAMQTREQHIRREKANSNICTSQVLLANIASLYAVYHGPIGLKRIANRIHRLTDILAAGLQQKGLKLRHAHYFDTLCVEVADKAGVLARAEAAEINLRSDILNAVGITLDETTTRENVMQLFSVLLGDNHGLDIDTLDKDVAHDSRSIQPAMLRDDEILTHPVFNRYHSETEMMRYMHSLERKDLALNQAMIPLGSCTMKLNAAAEMIPITWPEFAELHPFCPPEQAEGYQQMIAQLADWLVKLTGYDAVCMQPNSGAQGEYAGLLAIRHYHESRNEGHRDICLIPASAHGTNPASAHMAGMQVVVVACDKNGNIDLTDLRAKAEQAGDNLSCIMVTYPSTHGVYEETIREVCEVVHQFGGQVYLDGANMNAQVGITSPGFIGADVSHLNLHKTFCIPHGGGGPGMGPIGVKAHLAPFVPGHSVVQIEGMLTRQGAVSAAPFGSASILPISWMYIRMMGAEGLKKASQVAILNANYIASRLQDAFPVLYTGRDGRVAHECILDIRPLKEETGISELDIAKRLIDYGFHAPTMSFPVAGTLMVEPTESESKVELDRFIDAMLAIRAEIDQVKAGVWPLEDNPLVNAPHIQSELVAEWAHPYSREVAVFPAGVADKYWPTVKRLDDVYGDRNLFCSCVPISEYQ</sequence>
<protein>
    <recommendedName>
        <fullName evidence="1">Glycine dehydrogenase (decarboxylating)</fullName>
        <ecNumber evidence="1">1.4.4.2</ecNumber>
    </recommendedName>
    <alternativeName>
        <fullName evidence="1">Glycine cleavage system P-protein</fullName>
    </alternativeName>
    <alternativeName>
        <fullName evidence="1">Glycine decarboxylase</fullName>
    </alternativeName>
    <alternativeName>
        <fullName evidence="1">Glycine dehydrogenase (aminomethyl-transferring)</fullName>
    </alternativeName>
</protein>
<accession>B5YQ95</accession>